<accession>Q3E741</accession>
<accession>D6VPH9</accession>
<feature type="chain" id="PRO_0000248427" description="Putative uncharacterized protein YAL037C-A">
    <location>
        <begin position="1"/>
        <end position="30"/>
    </location>
</feature>
<name>YA037_YEAST</name>
<protein>
    <recommendedName>
        <fullName>Putative uncharacterized protein YAL037C-A</fullName>
    </recommendedName>
</protein>
<keyword id="KW-1185">Reference proteome</keyword>
<gene>
    <name type="ordered locus">YAL037C-A</name>
</gene>
<organism>
    <name type="scientific">Saccharomyces cerevisiae (strain ATCC 204508 / S288c)</name>
    <name type="common">Baker's yeast</name>
    <dbReference type="NCBI Taxonomy" id="559292"/>
    <lineage>
        <taxon>Eukaryota</taxon>
        <taxon>Fungi</taxon>
        <taxon>Dikarya</taxon>
        <taxon>Ascomycota</taxon>
        <taxon>Saccharomycotina</taxon>
        <taxon>Saccharomycetes</taxon>
        <taxon>Saccharomycetales</taxon>
        <taxon>Saccharomycetaceae</taxon>
        <taxon>Saccharomyces</taxon>
    </lineage>
</organism>
<dbReference type="EMBL" id="U12980">
    <property type="status" value="NOT_ANNOTATED_CDS"/>
    <property type="molecule type" value="Genomic_DNA"/>
</dbReference>
<dbReference type="EMBL" id="BK006935">
    <property type="protein sequence ID" value="DAA06949.1"/>
    <property type="molecule type" value="Genomic_DNA"/>
</dbReference>
<dbReference type="RefSeq" id="NP_878040.1">
    <property type="nucleotide sequence ID" value="NM_001184629.1"/>
</dbReference>
<dbReference type="BioGRID" id="36970">
    <property type="interactions" value="12"/>
</dbReference>
<dbReference type="FunCoup" id="Q3E741">
    <property type="interactions" value="14"/>
</dbReference>
<dbReference type="STRING" id="4932.YAL037C-A"/>
<dbReference type="PaxDb" id="4932-YAL037C-A"/>
<dbReference type="EnsemblFungi" id="YAL037C-A_mRNA">
    <property type="protein sequence ID" value="YAL037C-A"/>
    <property type="gene ID" value="YAL037C-A"/>
</dbReference>
<dbReference type="GeneID" id="1466428"/>
<dbReference type="KEGG" id="sce:YAL037C-A"/>
<dbReference type="AGR" id="SGD:S000028732"/>
<dbReference type="SGD" id="S000028732">
    <property type="gene designation" value="YAL037C-A"/>
</dbReference>
<dbReference type="VEuPathDB" id="FungiDB:YAL037C-A"/>
<dbReference type="HOGENOM" id="CLU_3406601_0_0_1"/>
<dbReference type="InParanoid" id="Q3E741"/>
<dbReference type="BioCyc" id="YEAST:G3O-28904-MONOMER"/>
<dbReference type="BioGRID-ORCS" id="1466428">
    <property type="hits" value="2 hits in 10 CRISPR screens"/>
</dbReference>
<dbReference type="PRO" id="PR:Q3E741"/>
<dbReference type="Proteomes" id="UP000002311">
    <property type="component" value="Chromosome I"/>
</dbReference>
<sequence length="30" mass="3447">MSISFPKMQHLIVMTTIGDKKVNNNIILFL</sequence>
<reference key="1">
    <citation type="journal article" date="1995" name="Proc. Natl. Acad. Sci. U.S.A.">
        <title>The nucleotide sequence of chromosome I from Saccharomyces cerevisiae.</title>
        <authorList>
            <person name="Bussey H."/>
            <person name="Kaback D.B."/>
            <person name="Zhong W.-W."/>
            <person name="Vo D.H."/>
            <person name="Clark M.W."/>
            <person name="Fortin N."/>
            <person name="Hall J."/>
            <person name="Ouellette B.F.F."/>
            <person name="Keng T."/>
            <person name="Barton A.B."/>
            <person name="Su Y."/>
            <person name="Davies C.J."/>
            <person name="Storms R.K."/>
        </authorList>
    </citation>
    <scope>NUCLEOTIDE SEQUENCE [LARGE SCALE GENOMIC DNA]</scope>
    <source>
        <strain>ATCC 204508 / S288c</strain>
    </source>
</reference>
<reference key="2">
    <citation type="journal article" date="2014" name="G3 (Bethesda)">
        <title>The reference genome sequence of Saccharomyces cerevisiae: Then and now.</title>
        <authorList>
            <person name="Engel S.R."/>
            <person name="Dietrich F.S."/>
            <person name="Fisk D.G."/>
            <person name="Binkley G."/>
            <person name="Balakrishnan R."/>
            <person name="Costanzo M.C."/>
            <person name="Dwight S.S."/>
            <person name="Hitz B.C."/>
            <person name="Karra K."/>
            <person name="Nash R.S."/>
            <person name="Weng S."/>
            <person name="Wong E.D."/>
            <person name="Lloyd P."/>
            <person name="Skrzypek M.S."/>
            <person name="Miyasato S.R."/>
            <person name="Simison M."/>
            <person name="Cherry J.M."/>
        </authorList>
    </citation>
    <scope>GENOME REANNOTATION</scope>
    <source>
        <strain>ATCC 204508 / S288c</strain>
    </source>
</reference>
<proteinExistence type="predicted"/>